<proteinExistence type="evidence at protein level"/>
<gene>
    <name evidence="2 13" type="primary">FITM2</name>
    <name type="synonym">C20orf142</name>
    <name evidence="2 9" type="synonym">FIT2</name>
</gene>
<organism>
    <name type="scientific">Homo sapiens</name>
    <name type="common">Human</name>
    <dbReference type="NCBI Taxonomy" id="9606"/>
    <lineage>
        <taxon>Eukaryota</taxon>
        <taxon>Metazoa</taxon>
        <taxon>Chordata</taxon>
        <taxon>Craniata</taxon>
        <taxon>Vertebrata</taxon>
        <taxon>Euteleostomi</taxon>
        <taxon>Mammalia</taxon>
        <taxon>Eutheria</taxon>
        <taxon>Euarchontoglires</taxon>
        <taxon>Primates</taxon>
        <taxon>Haplorrhini</taxon>
        <taxon>Catarrhini</taxon>
        <taxon>Hominidae</taxon>
        <taxon>Homo</taxon>
    </lineage>
</organism>
<protein>
    <recommendedName>
        <fullName evidence="2 10">Acyl-coenzyme A diphosphatase FITM2</fullName>
        <ecNumber evidence="2 8">3.6.1.-</ecNumber>
    </recommendedName>
    <alternativeName>
        <fullName evidence="2">Fat storage-inducing transmembrane protein 2</fullName>
    </alternativeName>
    <alternativeName>
        <fullName evidence="2">Fat-inducing protein 2</fullName>
    </alternativeName>
</protein>
<reference key="1">
    <citation type="journal article" date="2001" name="Nature">
        <title>The DNA sequence and comparative analysis of human chromosome 20.</title>
        <authorList>
            <person name="Deloukas P."/>
            <person name="Matthews L.H."/>
            <person name="Ashurst J.L."/>
            <person name="Burton J."/>
            <person name="Gilbert J.G.R."/>
            <person name="Jones M."/>
            <person name="Stavrides G."/>
            <person name="Almeida J.P."/>
            <person name="Babbage A.K."/>
            <person name="Bagguley C.L."/>
            <person name="Bailey J."/>
            <person name="Barlow K.F."/>
            <person name="Bates K.N."/>
            <person name="Beard L.M."/>
            <person name="Beare D.M."/>
            <person name="Beasley O.P."/>
            <person name="Bird C.P."/>
            <person name="Blakey S.E."/>
            <person name="Bridgeman A.M."/>
            <person name="Brown A.J."/>
            <person name="Buck D."/>
            <person name="Burrill W.D."/>
            <person name="Butler A.P."/>
            <person name="Carder C."/>
            <person name="Carter N.P."/>
            <person name="Chapman J.C."/>
            <person name="Clamp M."/>
            <person name="Clark G."/>
            <person name="Clark L.N."/>
            <person name="Clark S.Y."/>
            <person name="Clee C.M."/>
            <person name="Clegg S."/>
            <person name="Cobley V.E."/>
            <person name="Collier R.E."/>
            <person name="Connor R.E."/>
            <person name="Corby N.R."/>
            <person name="Coulson A."/>
            <person name="Coville G.J."/>
            <person name="Deadman R."/>
            <person name="Dhami P.D."/>
            <person name="Dunn M."/>
            <person name="Ellington A.G."/>
            <person name="Frankland J.A."/>
            <person name="Fraser A."/>
            <person name="French L."/>
            <person name="Garner P."/>
            <person name="Grafham D.V."/>
            <person name="Griffiths C."/>
            <person name="Griffiths M.N.D."/>
            <person name="Gwilliam R."/>
            <person name="Hall R.E."/>
            <person name="Hammond S."/>
            <person name="Harley J.L."/>
            <person name="Heath P.D."/>
            <person name="Ho S."/>
            <person name="Holden J.L."/>
            <person name="Howden P.J."/>
            <person name="Huckle E."/>
            <person name="Hunt A.R."/>
            <person name="Hunt S.E."/>
            <person name="Jekosch K."/>
            <person name="Johnson C.M."/>
            <person name="Johnson D."/>
            <person name="Kay M.P."/>
            <person name="Kimberley A.M."/>
            <person name="King A."/>
            <person name="Knights A."/>
            <person name="Laird G.K."/>
            <person name="Lawlor S."/>
            <person name="Lehvaeslaiho M.H."/>
            <person name="Leversha M.A."/>
            <person name="Lloyd C."/>
            <person name="Lloyd D.M."/>
            <person name="Lovell J.D."/>
            <person name="Marsh V.L."/>
            <person name="Martin S.L."/>
            <person name="McConnachie L.J."/>
            <person name="McLay K."/>
            <person name="McMurray A.A."/>
            <person name="Milne S.A."/>
            <person name="Mistry D."/>
            <person name="Moore M.J.F."/>
            <person name="Mullikin J.C."/>
            <person name="Nickerson T."/>
            <person name="Oliver K."/>
            <person name="Parker A."/>
            <person name="Patel R."/>
            <person name="Pearce T.A.V."/>
            <person name="Peck A.I."/>
            <person name="Phillimore B.J.C.T."/>
            <person name="Prathalingam S.R."/>
            <person name="Plumb R.W."/>
            <person name="Ramsay H."/>
            <person name="Rice C.M."/>
            <person name="Ross M.T."/>
            <person name="Scott C.E."/>
            <person name="Sehra H.K."/>
            <person name="Shownkeen R."/>
            <person name="Sims S."/>
            <person name="Skuce C.D."/>
            <person name="Smith M.L."/>
            <person name="Soderlund C."/>
            <person name="Steward C.A."/>
            <person name="Sulston J.E."/>
            <person name="Swann R.M."/>
            <person name="Sycamore N."/>
            <person name="Taylor R."/>
            <person name="Tee L."/>
            <person name="Thomas D.W."/>
            <person name="Thorpe A."/>
            <person name="Tracey A."/>
            <person name="Tromans A.C."/>
            <person name="Vaudin M."/>
            <person name="Wall M."/>
            <person name="Wallis J.M."/>
            <person name="Whitehead S.L."/>
            <person name="Whittaker P."/>
            <person name="Willey D.L."/>
            <person name="Williams L."/>
            <person name="Williams S.A."/>
            <person name="Wilming L."/>
            <person name="Wray P.W."/>
            <person name="Hubbard T."/>
            <person name="Durbin R.M."/>
            <person name="Bentley D.R."/>
            <person name="Beck S."/>
            <person name="Rogers J."/>
        </authorList>
    </citation>
    <scope>NUCLEOTIDE SEQUENCE [LARGE SCALE GENOMIC DNA]</scope>
</reference>
<reference key="2">
    <citation type="submission" date="2005-09" db="EMBL/GenBank/DDBJ databases">
        <authorList>
            <person name="Mural R.J."/>
            <person name="Istrail S."/>
            <person name="Sutton G.G."/>
            <person name="Florea L."/>
            <person name="Halpern A.L."/>
            <person name="Mobarry C.M."/>
            <person name="Lippert R."/>
            <person name="Walenz B."/>
            <person name="Shatkay H."/>
            <person name="Dew I."/>
            <person name="Miller J.R."/>
            <person name="Flanigan M.J."/>
            <person name="Edwards N.J."/>
            <person name="Bolanos R."/>
            <person name="Fasulo D."/>
            <person name="Halldorsson B.V."/>
            <person name="Hannenhalli S."/>
            <person name="Turner R."/>
            <person name="Yooseph S."/>
            <person name="Lu F."/>
            <person name="Nusskern D.R."/>
            <person name="Shue B.C."/>
            <person name="Zheng X.H."/>
            <person name="Zhong F."/>
            <person name="Delcher A.L."/>
            <person name="Huson D.H."/>
            <person name="Kravitz S.A."/>
            <person name="Mouchard L."/>
            <person name="Reinert K."/>
            <person name="Remington K.A."/>
            <person name="Clark A.G."/>
            <person name="Waterman M.S."/>
            <person name="Eichler E.E."/>
            <person name="Adams M.D."/>
            <person name="Hunkapiller M.W."/>
            <person name="Myers E.W."/>
            <person name="Venter J.C."/>
        </authorList>
    </citation>
    <scope>NUCLEOTIDE SEQUENCE [LARGE SCALE GENOMIC DNA]</scope>
</reference>
<reference key="3">
    <citation type="journal article" date="2004" name="Genome Res.">
        <title>The status, quality, and expansion of the NIH full-length cDNA project: the Mammalian Gene Collection (MGC).</title>
        <authorList>
            <consortium name="The MGC Project Team"/>
        </authorList>
    </citation>
    <scope>NUCLEOTIDE SEQUENCE [LARGE SCALE MRNA]</scope>
    <source>
        <tissue>Brain</tissue>
        <tissue>Testis</tissue>
    </source>
</reference>
<reference key="4">
    <citation type="journal article" date="2008" name="Proc. Natl. Acad. Sci. U.S.A.">
        <title>Evolutionarily conserved gene family important for fat storage.</title>
        <authorList>
            <person name="Kadereit B."/>
            <person name="Kumar P."/>
            <person name="Wang W.-J."/>
            <person name="Miranda D."/>
            <person name="Snapp E.L."/>
            <person name="Severina N."/>
            <person name="Torregroza I."/>
            <person name="Evans T."/>
            <person name="Silver D.L."/>
        </authorList>
    </citation>
    <scope>FUNCTION</scope>
    <scope>SUBCELLULAR LOCATION</scope>
    <scope>TISSUE SPECIFICITY</scope>
</reference>
<reference key="5">
    <citation type="journal article" date="2011" name="BMC Biol.">
        <title>Identification and characterization of a set of conserved and new regulators of cytoskeletal organisation, cell morphology and migration.</title>
        <authorList>
            <person name="Bai S.W."/>
            <person name="Herrera-Abreu M.T."/>
            <person name="Rohn J.L."/>
            <person name="Racine V."/>
            <person name="Tajadura V."/>
            <person name="Suryavanshi N."/>
            <person name="Bechtel S."/>
            <person name="Wiemann S."/>
            <person name="Baum B."/>
            <person name="Ridley A.J."/>
        </authorList>
    </citation>
    <scope>FUNCTION</scope>
</reference>
<reference key="6">
    <citation type="journal article" date="2020" name="J. Cell Biol.">
        <title>FIT2 is an acyl-coenzyme A diphosphatase crucial for endoplasmic reticulum homeostasis.</title>
        <authorList>
            <person name="Becuwe M."/>
            <person name="Bond L.M."/>
            <person name="Pinto A.F.M."/>
            <person name="Boland S."/>
            <person name="Mejhert N."/>
            <person name="Elliott S.D."/>
            <person name="Cicconet M."/>
            <person name="Graham M.M."/>
            <person name="Liu X.N."/>
            <person name="Ilkayeva O."/>
            <person name="Saghatelian A."/>
            <person name="Walther T.C."/>
            <person name="Farese R.V."/>
        </authorList>
    </citation>
    <scope>FUNCTION</scope>
    <scope>CATALYTIC ACTIVITY</scope>
    <scope>SUBSTRATE SPECIFICITY</scope>
    <scope>BIOPHYSICOCHEMICAL PROPERTIES</scope>
    <scope>ACTIVE SITE</scope>
    <scope>MUTAGENESIS OF HIS-155 AND HIS-214</scope>
</reference>
<reference key="7">
    <citation type="journal article" date="2017" name="Dis. Model. Mech.">
        <title>A homozygous FITM2 mutation causes a deafness-dystonia syndrome with motor regression and signs of ichthyosis and sensory neuropathy.</title>
        <authorList>
            <person name="Zazo Seco C."/>
            <person name="Castells-Nobau A."/>
            <person name="Joo S.H."/>
            <person name="Schraders M."/>
            <person name="Foo J.N."/>
            <person name="van der Voet M."/>
            <person name="Velan S.S."/>
            <person name="Nijhof B."/>
            <person name="Oostrik J."/>
            <person name="de Vrieze E."/>
            <person name="Katana R."/>
            <person name="Mansoor A."/>
            <person name="Huynen M."/>
            <person name="Szklarczyk R."/>
            <person name="Oti M."/>
            <person name="Tranebjaerg L."/>
            <person name="van Wijk E."/>
            <person name="Scheffer-de Gooyert J.M."/>
            <person name="Siddique S."/>
            <person name="Baets J."/>
            <person name="de Jonghe P."/>
            <person name="Kazmi S.A."/>
            <person name="Sadananthan S.A."/>
            <person name="van de Warrenburg B.P."/>
            <person name="Khor C.C."/>
            <person name="Goepfert M.C."/>
            <person name="Qamar R."/>
            <person name="Schenck A."/>
            <person name="Kremer H."/>
            <person name="Siddiqi S."/>
        </authorList>
    </citation>
    <scope>INVOLVEMENT IN SIDDIS SYNDROME</scope>
    <scope>VARIANT 2-GLU--LYS-262 DEL</scope>
</reference>
<reference key="8">
    <citation type="journal article" date="2018" name="Clin. Case Rep.">
        <title>The first case of deafness-dystonia syndrome due to compound heterozygous variants in FITM2.</title>
        <authorList>
            <person name="Shakir A."/>
            <person name="Wadley A.F."/>
            <person name="Purcarin G."/>
            <person name="Wierenga K.J."/>
        </authorList>
    </citation>
    <scope>VARIANT SIDDIS 218-GLN--LYS-262 DEL</scope>
</reference>
<reference key="9">
    <citation type="journal article" date="2018" name="Mov. Disord.">
        <title>First replication that biallelic variants in FITM2 cause a complex deafness-dystonia syndrome.</title>
        <authorList>
            <person name="Riedhammer K.M."/>
            <person name="Leszinski G.S."/>
            <person name="Andres S."/>
            <person name="Strobl-Wildemann G."/>
            <person name="Wagner M."/>
        </authorList>
    </citation>
    <scope>VARIANT SIDDIS ARG-232</scope>
</reference>
<evidence type="ECO:0000255" key="1"/>
<evidence type="ECO:0000255" key="2">
    <source>
        <dbReference type="HAMAP-Rule" id="MF_03230"/>
    </source>
</evidence>
<evidence type="ECO:0000269" key="3">
    <source>
    </source>
</evidence>
<evidence type="ECO:0000269" key="4">
    <source>
    </source>
</evidence>
<evidence type="ECO:0000269" key="5">
    <source>
    </source>
</evidence>
<evidence type="ECO:0000269" key="6">
    <source>
    </source>
</evidence>
<evidence type="ECO:0000269" key="7">
    <source>
    </source>
</evidence>
<evidence type="ECO:0000269" key="8">
    <source>
    </source>
</evidence>
<evidence type="ECO:0000303" key="9">
    <source>
    </source>
</evidence>
<evidence type="ECO:0000303" key="10">
    <source>
    </source>
</evidence>
<evidence type="ECO:0000305" key="11"/>
<evidence type="ECO:0000305" key="12">
    <source>
    </source>
</evidence>
<evidence type="ECO:0000312" key="13">
    <source>
        <dbReference type="HGNC" id="HGNC:16135"/>
    </source>
</evidence>
<keyword id="KW-0209">Deafness</keyword>
<keyword id="KW-0225">Disease variant</keyword>
<keyword id="KW-1023">Dystonia</keyword>
<keyword id="KW-0256">Endoplasmic reticulum</keyword>
<keyword id="KW-0378">Hydrolase</keyword>
<keyword id="KW-0991">Intellectual disability</keyword>
<keyword id="KW-0443">Lipid metabolism</keyword>
<keyword id="KW-0472">Membrane</keyword>
<keyword id="KW-1267">Proteomics identification</keyword>
<keyword id="KW-1185">Reference proteome</keyword>
<keyword id="KW-0812">Transmembrane</keyword>
<keyword id="KW-1133">Transmembrane helix</keyword>
<comment type="function">
    <text evidence="2 3 4 8">Fatty acyl-coenzyme A (CoA) diphosphatase that hydrolyzes fatty acyl-CoA to yield acyl-4'-phosphopantetheine and adenosine 3',5'-bisphosphate (By similarity) (PubMed:32915949). Preferentially hydrolyzes unsaturated long-chain acyl-CoA substrates such as oleoyl-CoA/(9Z)-octadecenoyl-CoA and arachidonoyl-CoA/(5Z,8Z,11Z,14Z)-eicosatetraenoyl-CoA in the endoplasmic reticulum (ER) lumen (By similarity) (PubMed:32915949). This catalytic activity is required for maintaining ER structure and for lipid droplets (LDs) biogenesis, which are lipid storage organelles involved in maintaining lipid and energy homeostasis (By similarity) (PubMed:18160536, PubMed:32915949). Directly binds to diacylglycerol (DAGs) and triacylglycerol, which is also important for LD biogenesis (By similarity). May support directional budding of nacent LDs from the ER into the cytosol by reducing DAG levels at sites of LD formation (By similarity). Plays a role in the regulation of cell morphology and cytoskeletal organization (By similarity) (PubMed:21834987).</text>
</comment>
<comment type="catalytic activity">
    <reaction evidence="2 8">
        <text>an acyl-CoA + H2O = an acyl-4'-phosphopantetheine + adenosine 3',5'-bisphosphate + 2 H(+)</text>
        <dbReference type="Rhea" id="RHEA:50044"/>
        <dbReference type="ChEBI" id="CHEBI:15377"/>
        <dbReference type="ChEBI" id="CHEBI:15378"/>
        <dbReference type="ChEBI" id="CHEBI:58342"/>
        <dbReference type="ChEBI" id="CHEBI:58343"/>
        <dbReference type="ChEBI" id="CHEBI:132023"/>
    </reaction>
    <physiologicalReaction direction="left-to-right" evidence="2 12">
        <dbReference type="Rhea" id="RHEA:50045"/>
    </physiologicalReaction>
</comment>
<comment type="catalytic activity">
    <reaction evidence="2 8">
        <text>(9Z)-octadecenoyl-CoA + H2O = S-(9Z-octadecenoyl)-4'-phosphopantetheine + adenosine 3',5'-bisphosphate + 2 H(+)</text>
        <dbReference type="Rhea" id="RHEA:65564"/>
        <dbReference type="ChEBI" id="CHEBI:15377"/>
        <dbReference type="ChEBI" id="CHEBI:15378"/>
        <dbReference type="ChEBI" id="CHEBI:57387"/>
        <dbReference type="ChEBI" id="CHEBI:58343"/>
        <dbReference type="ChEBI" id="CHEBI:156553"/>
    </reaction>
    <physiologicalReaction direction="left-to-right" evidence="2 12">
        <dbReference type="Rhea" id="RHEA:65565"/>
    </physiologicalReaction>
</comment>
<comment type="catalytic activity">
    <reaction evidence="2 8">
        <text>(5Z,8Z,11Z,14Z)-eicosatetraenoyl-CoA + H2O = S-(5Z,8Z,11Z,14Z-eicosatetraenoyl)-4'-phosphopantetheine + adenosine 3',5'-bisphosphate + 2 H(+)</text>
        <dbReference type="Rhea" id="RHEA:65568"/>
        <dbReference type="ChEBI" id="CHEBI:15377"/>
        <dbReference type="ChEBI" id="CHEBI:15378"/>
        <dbReference type="ChEBI" id="CHEBI:57368"/>
        <dbReference type="ChEBI" id="CHEBI:58343"/>
        <dbReference type="ChEBI" id="CHEBI:156554"/>
    </reaction>
    <physiologicalReaction direction="left-to-right" evidence="2 12">
        <dbReference type="Rhea" id="RHEA:65569"/>
    </physiologicalReaction>
</comment>
<comment type="catalytic activity">
    <reaction evidence="2 8">
        <text>hexadecanoyl-CoA + H2O = S-hexadecanoyl-4'-phosphopantetheine + adenosine 3',5'-bisphosphate + 2 H(+)</text>
        <dbReference type="Rhea" id="RHEA:50032"/>
        <dbReference type="ChEBI" id="CHEBI:15377"/>
        <dbReference type="ChEBI" id="CHEBI:15378"/>
        <dbReference type="ChEBI" id="CHEBI:57379"/>
        <dbReference type="ChEBI" id="CHEBI:58343"/>
        <dbReference type="ChEBI" id="CHEBI:132018"/>
    </reaction>
    <physiologicalReaction direction="left-to-right" evidence="2 12">
        <dbReference type="Rhea" id="RHEA:50033"/>
    </physiologicalReaction>
</comment>
<comment type="biophysicochemical properties">
    <kinetics>
        <KM evidence="8">10 uM for (9Z)-octadecenoyl-CoA</KM>
        <Vmax evidence="8">6.5 umol/min/mg enzyme with (9Z)-octadecenoyl-CoA as substrate</Vmax>
    </kinetics>
</comment>
<comment type="interaction">
    <interactant intactId="EBI-11722638">
        <id>Q8N6M3</id>
    </interactant>
    <interactant intactId="EBI-12937691">
        <id>Q9BUP3-3</id>
        <label>HTATIP2</label>
    </interactant>
    <organismsDiffer>false</organismsDiffer>
    <experiments>3</experiments>
</comment>
<comment type="interaction">
    <interactant intactId="EBI-11722638">
        <id>Q8N6M3</id>
    </interactant>
    <interactant intactId="EBI-2851325">
        <id>Q96SJ8</id>
        <label>TSPAN18</label>
    </interactant>
    <organismsDiffer>false</organismsDiffer>
    <experiments>2</experiments>
</comment>
<comment type="interaction">
    <interactant intactId="EBI-11722638">
        <id>Q8N6M3</id>
    </interactant>
    <interactant intactId="EBI-7601760">
        <id>Q53HI1</id>
        <label>UNC50</label>
    </interactant>
    <organismsDiffer>false</organismsDiffer>
    <experiments>3</experiments>
</comment>
<comment type="subcellular location">
    <subcellularLocation>
        <location evidence="2 3">Endoplasmic reticulum membrane</location>
        <topology evidence="2">Multi-pass membrane protein</topology>
    </subcellularLocation>
</comment>
<comment type="tissue specificity">
    <text evidence="3">Widely expressed.</text>
</comment>
<comment type="disease" evidence="5 6 7">
    <disease id="DI-05681">
        <name>Siddiqi syndrome</name>
        <acronym>SIDDIS</acronym>
        <description>An autosomal recessive disorder characterized by early-onset progressive sensorineural hearing impairment, global developmental delay, regression of motor skills, dystonia, and low body mass index. Some patients have an ichthosis-like appearance of the skin and signs of sensory neuropathy.</description>
        <dbReference type="MIM" id="618635"/>
    </disease>
    <text>The disease is caused by variants affecting the gene represented in this entry.</text>
</comment>
<comment type="similarity">
    <text evidence="2">Belongs to the FIT family. FIT2 subfamily.</text>
</comment>
<accession>Q8N6M3</accession>
<accession>A1L492</accession>
<accession>B9EGQ4</accession>
<accession>Q5TE59</accession>
<accession>Q9H3Y1</accession>
<name>FITM2_HUMAN</name>
<sequence length="262" mass="29855">MEHLERCEWLLRGTLVRAAVRRYLPWALVASMLAGSLLKELSPLPESYLSNKRNVLNVYFVKVAWAWTFCLLLPFIALTNYHLTGKAGLVLRRLSTLLVGTAIWYICTSIFSNIEHYTGSCYQSPALEGVRKEHQSKQQCHQEGGFWHGFDISGHSFLLTFCALMIVEEMSVLHEVKTDRSHCLHTAITTLVVALGILTFIWVLMFLCTAVYFHNLSQKVFGTLFGLLSWYGTYGFWYPKAFSPGLPPQSCSLNLKQDSYKK</sequence>
<dbReference type="EC" id="3.6.1.-" evidence="2 8"/>
<dbReference type="EMBL" id="AL117382">
    <property type="status" value="NOT_ANNOTATED_CDS"/>
    <property type="molecule type" value="Genomic_DNA"/>
</dbReference>
<dbReference type="EMBL" id="CH471077">
    <property type="protein sequence ID" value="EAW75929.1"/>
    <property type="molecule type" value="Genomic_DNA"/>
</dbReference>
<dbReference type="EMBL" id="BC130446">
    <property type="protein sequence ID" value="AAI30447.1"/>
    <property type="molecule type" value="mRNA"/>
</dbReference>
<dbReference type="EMBL" id="BC136640">
    <property type="protein sequence ID" value="AAI36641.1"/>
    <property type="molecule type" value="mRNA"/>
</dbReference>
<dbReference type="EMBL" id="BC029662">
    <property type="status" value="NOT_ANNOTATED_CDS"/>
    <property type="molecule type" value="mRNA"/>
</dbReference>
<dbReference type="CCDS" id="CCDS33473.1"/>
<dbReference type="RefSeq" id="NP_001073941.1">
    <property type="nucleotide sequence ID" value="NM_001080472.4"/>
</dbReference>
<dbReference type="RefSeq" id="XP_054178917.1">
    <property type="nucleotide sequence ID" value="XM_054322942.1"/>
</dbReference>
<dbReference type="BioGRID" id="126125">
    <property type="interactions" value="70"/>
</dbReference>
<dbReference type="FunCoup" id="Q8N6M3">
    <property type="interactions" value="956"/>
</dbReference>
<dbReference type="IntAct" id="Q8N6M3">
    <property type="interactions" value="67"/>
</dbReference>
<dbReference type="MINT" id="Q8N6M3"/>
<dbReference type="STRING" id="9606.ENSP00000380037"/>
<dbReference type="TCDB" id="9.B.287.1.1">
    <property type="family name" value="the fat storage-inducing transmembrane protein 2 (fit2) family"/>
</dbReference>
<dbReference type="iPTMnet" id="Q8N6M3"/>
<dbReference type="PhosphoSitePlus" id="Q8N6M3"/>
<dbReference type="SwissPalm" id="Q8N6M3"/>
<dbReference type="BioMuta" id="FITM2"/>
<dbReference type="DMDM" id="28212210"/>
<dbReference type="jPOST" id="Q8N6M3"/>
<dbReference type="MassIVE" id="Q8N6M3"/>
<dbReference type="PaxDb" id="9606-ENSP00000380037"/>
<dbReference type="PeptideAtlas" id="Q8N6M3"/>
<dbReference type="ProteomicsDB" id="72192"/>
<dbReference type="Pumba" id="Q8N6M3"/>
<dbReference type="DNASU" id="128486"/>
<dbReference type="Ensembl" id="ENST00000396825.4">
    <property type="protein sequence ID" value="ENSP00000380037.3"/>
    <property type="gene ID" value="ENSG00000197296.6"/>
</dbReference>
<dbReference type="GeneID" id="128486"/>
<dbReference type="KEGG" id="hsa:128486"/>
<dbReference type="MANE-Select" id="ENST00000396825.4">
    <property type="protein sequence ID" value="ENSP00000380037.3"/>
    <property type="RefSeq nucleotide sequence ID" value="NM_001080472.4"/>
    <property type="RefSeq protein sequence ID" value="NP_001073941.1"/>
</dbReference>
<dbReference type="UCSC" id="uc002xlr.2">
    <property type="organism name" value="human"/>
</dbReference>
<dbReference type="AGR" id="HGNC:16135"/>
<dbReference type="CTD" id="128486"/>
<dbReference type="DisGeNET" id="128486"/>
<dbReference type="GeneCards" id="FITM2"/>
<dbReference type="HGNC" id="HGNC:16135">
    <property type="gene designation" value="FITM2"/>
</dbReference>
<dbReference type="HPA" id="ENSG00000197296">
    <property type="expression patterns" value="Tissue enriched (heart)"/>
</dbReference>
<dbReference type="MalaCards" id="FITM2"/>
<dbReference type="MIM" id="612029">
    <property type="type" value="gene"/>
</dbReference>
<dbReference type="MIM" id="618635">
    <property type="type" value="phenotype"/>
</dbReference>
<dbReference type="neXtProt" id="NX_Q8N6M3"/>
<dbReference type="OpenTargets" id="ENSG00000197296"/>
<dbReference type="PharmGKB" id="PA25685"/>
<dbReference type="VEuPathDB" id="HostDB:ENSG00000197296"/>
<dbReference type="eggNOG" id="KOG3750">
    <property type="taxonomic scope" value="Eukaryota"/>
</dbReference>
<dbReference type="GeneTree" id="ENSGT00530000063693"/>
<dbReference type="HOGENOM" id="CLU_049499_1_1_1"/>
<dbReference type="InParanoid" id="Q8N6M3"/>
<dbReference type="OMA" id="TYRFWYL"/>
<dbReference type="OrthoDB" id="5579088at2759"/>
<dbReference type="PAN-GO" id="Q8N6M3">
    <property type="GO annotations" value="4 GO annotations based on evolutionary models"/>
</dbReference>
<dbReference type="PhylomeDB" id="Q8N6M3"/>
<dbReference type="PathwayCommons" id="Q8N6M3"/>
<dbReference type="Reactome" id="R-HSA-8964572">
    <property type="pathway name" value="Lipid particle organization"/>
</dbReference>
<dbReference type="SABIO-RK" id="Q8N6M3"/>
<dbReference type="SignaLink" id="Q8N6M3"/>
<dbReference type="BioGRID-ORCS" id="128486">
    <property type="hits" value="42 hits in 1157 CRISPR screens"/>
</dbReference>
<dbReference type="ChiTaRS" id="FITM2">
    <property type="organism name" value="human"/>
</dbReference>
<dbReference type="GenomeRNAi" id="128486"/>
<dbReference type="Pharos" id="Q8N6M3">
    <property type="development level" value="Tdark"/>
</dbReference>
<dbReference type="PRO" id="PR:Q8N6M3"/>
<dbReference type="Proteomes" id="UP000005640">
    <property type="component" value="Chromosome 20"/>
</dbReference>
<dbReference type="RNAct" id="Q8N6M3">
    <property type="molecule type" value="protein"/>
</dbReference>
<dbReference type="Bgee" id="ENSG00000197296">
    <property type="expression patterns" value="Expressed in cardiac muscle of right atrium and 184 other cell types or tissues"/>
</dbReference>
<dbReference type="GO" id="GO:0005789">
    <property type="term" value="C:endoplasmic reticulum membrane"/>
    <property type="evidence" value="ECO:0000250"/>
    <property type="project" value="UniProtKB"/>
</dbReference>
<dbReference type="GO" id="GO:0010945">
    <property type="term" value="F:coenzyme A diphosphatase activity"/>
    <property type="evidence" value="ECO:0000315"/>
    <property type="project" value="UniProtKB"/>
</dbReference>
<dbReference type="GO" id="GO:0019992">
    <property type="term" value="F:diacylglycerol binding"/>
    <property type="evidence" value="ECO:0000250"/>
    <property type="project" value="UniProtKB"/>
</dbReference>
<dbReference type="GO" id="GO:0017129">
    <property type="term" value="F:triglyceride binding"/>
    <property type="evidence" value="ECO:0000250"/>
    <property type="project" value="UniProtKB"/>
</dbReference>
<dbReference type="GO" id="GO:0007010">
    <property type="term" value="P:cytoskeleton organization"/>
    <property type="evidence" value="ECO:0000315"/>
    <property type="project" value="UniProtKB"/>
</dbReference>
<dbReference type="GO" id="GO:0045444">
    <property type="term" value="P:fat cell differentiation"/>
    <property type="evidence" value="ECO:0000250"/>
    <property type="project" value="BHF-UCL"/>
</dbReference>
<dbReference type="GO" id="GO:0036115">
    <property type="term" value="P:fatty-acyl-CoA catabolic process"/>
    <property type="evidence" value="ECO:0000315"/>
    <property type="project" value="UniProtKB"/>
</dbReference>
<dbReference type="GO" id="GO:0035356">
    <property type="term" value="P:intracellular triglyceride homeostasis"/>
    <property type="evidence" value="ECO:0000250"/>
    <property type="project" value="BHF-UCL"/>
</dbReference>
<dbReference type="GO" id="GO:0140042">
    <property type="term" value="P:lipid droplet formation"/>
    <property type="evidence" value="ECO:0000315"/>
    <property type="project" value="UniProtKB"/>
</dbReference>
<dbReference type="GO" id="GO:0034389">
    <property type="term" value="P:lipid droplet organization"/>
    <property type="evidence" value="ECO:0000250"/>
    <property type="project" value="UniProtKB"/>
</dbReference>
<dbReference type="GO" id="GO:0055088">
    <property type="term" value="P:lipid homeostasis"/>
    <property type="evidence" value="ECO:0000315"/>
    <property type="project" value="UniProtKB"/>
</dbReference>
<dbReference type="GO" id="GO:0019915">
    <property type="term" value="P:lipid storage"/>
    <property type="evidence" value="ECO:0000318"/>
    <property type="project" value="GO_Central"/>
</dbReference>
<dbReference type="GO" id="GO:0008654">
    <property type="term" value="P:phospholipid biosynthetic process"/>
    <property type="evidence" value="ECO:0000318"/>
    <property type="project" value="GO_Central"/>
</dbReference>
<dbReference type="GO" id="GO:0022604">
    <property type="term" value="P:regulation of cell morphogenesis"/>
    <property type="evidence" value="ECO:0000315"/>
    <property type="project" value="UniProtKB"/>
</dbReference>
<dbReference type="GO" id="GO:0006641">
    <property type="term" value="P:triglyceride metabolic process"/>
    <property type="evidence" value="ECO:0000250"/>
    <property type="project" value="BHF-UCL"/>
</dbReference>
<dbReference type="GO" id="GO:0030730">
    <property type="term" value="P:triglyceride storage"/>
    <property type="evidence" value="ECO:0007669"/>
    <property type="project" value="Ensembl"/>
</dbReference>
<dbReference type="HAMAP" id="MF_03230">
    <property type="entry name" value="FITM2"/>
    <property type="match status" value="1"/>
</dbReference>
<dbReference type="InterPro" id="IPR019388">
    <property type="entry name" value="FIT"/>
</dbReference>
<dbReference type="InterPro" id="IPR046401">
    <property type="entry name" value="FITM1/2"/>
</dbReference>
<dbReference type="PANTHER" id="PTHR23129">
    <property type="entry name" value="ACYL-COENZYME A DIPHOSPHATASE FITM2"/>
    <property type="match status" value="1"/>
</dbReference>
<dbReference type="PANTHER" id="PTHR23129:SF1">
    <property type="entry name" value="ACYL-COENZYME A DIPHOSPHATASE FITM2"/>
    <property type="match status" value="1"/>
</dbReference>
<dbReference type="Pfam" id="PF10261">
    <property type="entry name" value="FIT"/>
    <property type="match status" value="1"/>
</dbReference>
<feature type="chain" id="PRO_0000021035" description="Acyl-coenzyme A diphosphatase FITM2">
    <location>
        <begin position="1"/>
        <end position="262"/>
    </location>
</feature>
<feature type="topological domain" description="Cytoplasmic" evidence="11">
    <location>
        <begin position="1"/>
        <end position="23"/>
    </location>
</feature>
<feature type="transmembrane region" description="Helical" evidence="1">
    <location>
        <begin position="24"/>
        <end position="44"/>
    </location>
</feature>
<feature type="topological domain" description="Lumenal" evidence="11">
    <location>
        <begin position="45"/>
        <end position="57"/>
    </location>
</feature>
<feature type="transmembrane region" description="Helical" evidence="1">
    <location>
        <begin position="58"/>
        <end position="78"/>
    </location>
</feature>
<feature type="topological domain" description="Cytoplasmic" evidence="11">
    <location>
        <begin position="79"/>
        <end position="93"/>
    </location>
</feature>
<feature type="transmembrane region" description="Helical" evidence="1">
    <location>
        <begin position="94"/>
        <end position="114"/>
    </location>
</feature>
<feature type="topological domain" description="Lumenal" evidence="11">
    <location>
        <begin position="115"/>
        <end position="145"/>
    </location>
</feature>
<feature type="transmembrane region" description="Helical" evidence="1">
    <location>
        <begin position="146"/>
        <end position="166"/>
    </location>
</feature>
<feature type="topological domain" description="Cytoplasmic" evidence="11">
    <location>
        <begin position="167"/>
        <end position="190"/>
    </location>
</feature>
<feature type="transmembrane region" description="Helical" evidence="1">
    <location>
        <begin position="191"/>
        <end position="211"/>
    </location>
</feature>
<feature type="topological domain" description="Lumenal" evidence="11">
    <location>
        <begin position="212"/>
        <end position="218"/>
    </location>
</feature>
<feature type="transmembrane region" description="Helical" evidence="1">
    <location>
        <begin position="219"/>
        <end position="239"/>
    </location>
</feature>
<feature type="topological domain" description="Cytoplasmic" evidence="11">
    <location>
        <begin position="240"/>
        <end position="262"/>
    </location>
</feature>
<feature type="active site" evidence="2 8">
    <location>
        <position position="155"/>
    </location>
</feature>
<feature type="active site" evidence="2 8">
    <location>
        <position position="214"/>
    </location>
</feature>
<feature type="sequence variant" id="VAR_081219" description="In SIDDIS." evidence="5">
    <location>
        <begin position="2"/>
        <end position="262"/>
    </location>
</feature>
<feature type="sequence variant" id="VAR_083498" description="In SIDDIS." evidence="6">
    <location>
        <begin position="218"/>
        <end position="262"/>
    </location>
</feature>
<feature type="sequence variant" id="VAR_083499" description="In SIDDIS; dbSNP:rs765281145." evidence="7">
    <original>G</original>
    <variation>R</variation>
    <location>
        <position position="232"/>
    </location>
</feature>
<feature type="mutagenesis site" description="Loss of oleoyl-CoA diphosphatase activity; when associated with A-214. Impaired ER morphology. No difference in the appearance of the Golgi apparatus, lysosomes or peroxisomes." evidence="8">
    <original>H</original>
    <variation>A</variation>
    <location>
        <position position="155"/>
    </location>
</feature>
<feature type="mutagenesis site" description="Loss of oleoyl-CoA diphosphatase activity; when associated with A-155. Impaired ER morphology, ER homeostasis and lipid droplet biogenesis. No difference in the appearance of the Golgi apparatus, lysosomes or peroxisomes." evidence="8">
    <original>H</original>
    <variation>A</variation>
    <location>
        <position position="214"/>
    </location>
</feature>